<proteinExistence type="inferred from homology"/>
<sequence>MTDTLPTVSRRGLMLVMSSPSGAGKTTISRALLERDPAIGMSVSATTRAPRPGEVDGKDYHFVTVEKFHEMVEKREFLEHARVFDNFYGTPRGPVDEILRSGRDVLFDIDWQGTQQMAQNARADLVSVFVLPPSVEELERRLRGRAQDSDEVVRKRMAKAGDEMSHWPEYDYIVVNIDLDKSIAAVQAILAAERLKRERQVGLPDFVTQLRGGE</sequence>
<organism>
    <name type="scientific">Paramagnetospirillum magneticum (strain ATCC 700264 / AMB-1)</name>
    <name type="common">Magnetospirillum magneticum</name>
    <dbReference type="NCBI Taxonomy" id="342108"/>
    <lineage>
        <taxon>Bacteria</taxon>
        <taxon>Pseudomonadati</taxon>
        <taxon>Pseudomonadota</taxon>
        <taxon>Alphaproteobacteria</taxon>
        <taxon>Rhodospirillales</taxon>
        <taxon>Magnetospirillaceae</taxon>
        <taxon>Paramagnetospirillum</taxon>
    </lineage>
</organism>
<keyword id="KW-0067">ATP-binding</keyword>
<keyword id="KW-0963">Cytoplasm</keyword>
<keyword id="KW-0418">Kinase</keyword>
<keyword id="KW-0547">Nucleotide-binding</keyword>
<keyword id="KW-0808">Transferase</keyword>
<evidence type="ECO:0000255" key="1">
    <source>
        <dbReference type="HAMAP-Rule" id="MF_00328"/>
    </source>
</evidence>
<comment type="function">
    <text evidence="1">Essential for recycling GMP and indirectly, cGMP.</text>
</comment>
<comment type="catalytic activity">
    <reaction evidence="1">
        <text>GMP + ATP = GDP + ADP</text>
        <dbReference type="Rhea" id="RHEA:20780"/>
        <dbReference type="ChEBI" id="CHEBI:30616"/>
        <dbReference type="ChEBI" id="CHEBI:58115"/>
        <dbReference type="ChEBI" id="CHEBI:58189"/>
        <dbReference type="ChEBI" id="CHEBI:456216"/>
        <dbReference type="EC" id="2.7.4.8"/>
    </reaction>
</comment>
<comment type="subcellular location">
    <subcellularLocation>
        <location evidence="1">Cytoplasm</location>
    </subcellularLocation>
</comment>
<comment type="similarity">
    <text evidence="1">Belongs to the guanylate kinase family.</text>
</comment>
<dbReference type="EC" id="2.7.4.8" evidence="1"/>
<dbReference type="EMBL" id="AP007255">
    <property type="protein sequence ID" value="BAE49552.1"/>
    <property type="molecule type" value="Genomic_DNA"/>
</dbReference>
<dbReference type="RefSeq" id="WP_011383191.1">
    <property type="nucleotide sequence ID" value="NC_007626.1"/>
</dbReference>
<dbReference type="SMR" id="Q2W9C3"/>
<dbReference type="STRING" id="342108.amb0748"/>
<dbReference type="KEGG" id="mag:amb0748"/>
<dbReference type="HOGENOM" id="CLU_001715_1_0_5"/>
<dbReference type="OrthoDB" id="9808150at2"/>
<dbReference type="Proteomes" id="UP000007058">
    <property type="component" value="Chromosome"/>
</dbReference>
<dbReference type="GO" id="GO:0005829">
    <property type="term" value="C:cytosol"/>
    <property type="evidence" value="ECO:0007669"/>
    <property type="project" value="TreeGrafter"/>
</dbReference>
<dbReference type="GO" id="GO:0005524">
    <property type="term" value="F:ATP binding"/>
    <property type="evidence" value="ECO:0007669"/>
    <property type="project" value="UniProtKB-UniRule"/>
</dbReference>
<dbReference type="GO" id="GO:0004385">
    <property type="term" value="F:guanylate kinase activity"/>
    <property type="evidence" value="ECO:0007669"/>
    <property type="project" value="UniProtKB-UniRule"/>
</dbReference>
<dbReference type="CDD" id="cd00071">
    <property type="entry name" value="GMPK"/>
    <property type="match status" value="1"/>
</dbReference>
<dbReference type="FunFam" id="3.30.63.10:FF:000002">
    <property type="entry name" value="Guanylate kinase 1"/>
    <property type="match status" value="1"/>
</dbReference>
<dbReference type="Gene3D" id="3.30.63.10">
    <property type="entry name" value="Guanylate Kinase phosphate binding domain"/>
    <property type="match status" value="1"/>
</dbReference>
<dbReference type="Gene3D" id="3.40.50.300">
    <property type="entry name" value="P-loop containing nucleotide triphosphate hydrolases"/>
    <property type="match status" value="2"/>
</dbReference>
<dbReference type="HAMAP" id="MF_00328">
    <property type="entry name" value="Guanylate_kinase"/>
    <property type="match status" value="1"/>
</dbReference>
<dbReference type="InterPro" id="IPR008145">
    <property type="entry name" value="GK/Ca_channel_bsu"/>
</dbReference>
<dbReference type="InterPro" id="IPR008144">
    <property type="entry name" value="Guanylate_kin-like_dom"/>
</dbReference>
<dbReference type="InterPro" id="IPR017665">
    <property type="entry name" value="Guanylate_kinase"/>
</dbReference>
<dbReference type="InterPro" id="IPR020590">
    <property type="entry name" value="Guanylate_kinase_CS"/>
</dbReference>
<dbReference type="InterPro" id="IPR027417">
    <property type="entry name" value="P-loop_NTPase"/>
</dbReference>
<dbReference type="NCBIfam" id="TIGR03263">
    <property type="entry name" value="guanyl_kin"/>
    <property type="match status" value="1"/>
</dbReference>
<dbReference type="PANTHER" id="PTHR23117:SF13">
    <property type="entry name" value="GUANYLATE KINASE"/>
    <property type="match status" value="1"/>
</dbReference>
<dbReference type="PANTHER" id="PTHR23117">
    <property type="entry name" value="GUANYLATE KINASE-RELATED"/>
    <property type="match status" value="1"/>
</dbReference>
<dbReference type="Pfam" id="PF00625">
    <property type="entry name" value="Guanylate_kin"/>
    <property type="match status" value="1"/>
</dbReference>
<dbReference type="SMART" id="SM00072">
    <property type="entry name" value="GuKc"/>
    <property type="match status" value="1"/>
</dbReference>
<dbReference type="SUPFAM" id="SSF52540">
    <property type="entry name" value="P-loop containing nucleoside triphosphate hydrolases"/>
    <property type="match status" value="1"/>
</dbReference>
<dbReference type="PROSITE" id="PS00856">
    <property type="entry name" value="GUANYLATE_KINASE_1"/>
    <property type="match status" value="1"/>
</dbReference>
<dbReference type="PROSITE" id="PS50052">
    <property type="entry name" value="GUANYLATE_KINASE_2"/>
    <property type="match status" value="1"/>
</dbReference>
<feature type="chain" id="PRO_0000266344" description="Guanylate kinase">
    <location>
        <begin position="1"/>
        <end position="214"/>
    </location>
</feature>
<feature type="domain" description="Guanylate kinase-like" evidence="1">
    <location>
        <begin position="12"/>
        <end position="191"/>
    </location>
</feature>
<feature type="binding site" evidence="1">
    <location>
        <begin position="19"/>
        <end position="26"/>
    </location>
    <ligand>
        <name>ATP</name>
        <dbReference type="ChEBI" id="CHEBI:30616"/>
    </ligand>
</feature>
<gene>
    <name evidence="1" type="primary">gmk</name>
    <name type="ordered locus">amb0748</name>
</gene>
<name>KGUA_PARM1</name>
<protein>
    <recommendedName>
        <fullName evidence="1">Guanylate kinase</fullName>
        <ecNumber evidence="1">2.7.4.8</ecNumber>
    </recommendedName>
    <alternativeName>
        <fullName evidence="1">GMP kinase</fullName>
    </alternativeName>
</protein>
<reference key="1">
    <citation type="journal article" date="2005" name="DNA Res.">
        <title>Complete genome sequence of the facultative anaerobic magnetotactic bacterium Magnetospirillum sp. strain AMB-1.</title>
        <authorList>
            <person name="Matsunaga T."/>
            <person name="Okamura Y."/>
            <person name="Fukuda Y."/>
            <person name="Wahyudi A.T."/>
            <person name="Murase Y."/>
            <person name="Takeyama H."/>
        </authorList>
    </citation>
    <scope>NUCLEOTIDE SEQUENCE [LARGE SCALE GENOMIC DNA]</scope>
    <source>
        <strain>ATCC 700264 / AMB-1</strain>
    </source>
</reference>
<accession>Q2W9C3</accession>